<evidence type="ECO:0000255" key="1">
    <source>
        <dbReference type="HAMAP-Rule" id="MF_01858"/>
    </source>
</evidence>
<evidence type="ECO:0000305" key="2"/>
<protein>
    <recommendedName>
        <fullName evidence="1">Ribosomal RNA large subunit methyltransferase K/L</fullName>
    </recommendedName>
    <domain>
        <recommendedName>
            <fullName evidence="1">23S rRNA m2G2445 methyltransferase</fullName>
            <ecNumber evidence="1">2.1.1.173</ecNumber>
        </recommendedName>
        <alternativeName>
            <fullName evidence="1">rRNA (guanine-N(2)-)-methyltransferase RlmL</fullName>
        </alternativeName>
    </domain>
    <domain>
        <recommendedName>
            <fullName evidence="1">23S rRNA m7G2069 methyltransferase</fullName>
            <ecNumber evidence="1">2.1.1.264</ecNumber>
        </recommendedName>
        <alternativeName>
            <fullName evidence="1">rRNA (guanine-N(7)-)-methyltransferase RlmK</fullName>
        </alternativeName>
    </domain>
</protein>
<organism>
    <name type="scientific">Haemophilus ducreyi (strain 35000HP / ATCC 700724)</name>
    <dbReference type="NCBI Taxonomy" id="233412"/>
    <lineage>
        <taxon>Bacteria</taxon>
        <taxon>Pseudomonadati</taxon>
        <taxon>Pseudomonadota</taxon>
        <taxon>Gammaproteobacteria</taxon>
        <taxon>Pasteurellales</taxon>
        <taxon>Pasteurellaceae</taxon>
        <taxon>Haemophilus</taxon>
    </lineage>
</organism>
<reference key="1">
    <citation type="submission" date="2003-06" db="EMBL/GenBank/DDBJ databases">
        <title>The complete genome sequence of Haemophilus ducreyi.</title>
        <authorList>
            <person name="Munson R.S. Jr."/>
            <person name="Ray W.C."/>
            <person name="Mahairas G."/>
            <person name="Sabo P."/>
            <person name="Mungur R."/>
            <person name="Johnson L."/>
            <person name="Nguyen D."/>
            <person name="Wang J."/>
            <person name="Forst C."/>
            <person name="Hood L."/>
        </authorList>
    </citation>
    <scope>NUCLEOTIDE SEQUENCE [LARGE SCALE GENOMIC DNA]</scope>
    <source>
        <strain>35000HP / ATCC 700724</strain>
    </source>
</reference>
<gene>
    <name evidence="1" type="primary">rlmL</name>
    <name type="ordered locus">HD_0307</name>
</gene>
<keyword id="KW-0963">Cytoplasm</keyword>
<keyword id="KW-0489">Methyltransferase</keyword>
<keyword id="KW-1185">Reference proteome</keyword>
<keyword id="KW-0694">RNA-binding</keyword>
<keyword id="KW-0698">rRNA processing</keyword>
<keyword id="KW-0949">S-adenosyl-L-methionine</keyword>
<keyword id="KW-0808">Transferase</keyword>
<sequence>MSNQITYFATAARGFEEMLKIELEQICGADGKVVQGGVHFTTNQKGAYQALLHSRLASRILLPLVSTKIFSDLDLYATIIAINWADIFDPRDTFYVDFNGTNREIRNTQFGAMRVKDGIVDYFERKRFARPIVDKDRPDIRIHVYLDREKLIVSLDLSGEALHMRGYREDTGKAPLRETLAAIIVLRSGWQKGTPLVDPMCGSGTLLIEAAQMQAGIVPQLQRKYWGFNAWKGHQQAIWQQVLEEAHSQKNTQIDPLFYGFDLDHRVLAKAKQNAQNAGVAHLIHWQQADIAALKNPCLDQKGTLVSNPPYGERLGTTPALIALYSVFGQRLKQQFAGWNVSIFSGEPSLLNCLRLRSTRQFKAKNGPLDCLQKNYQIAEYAIHNQHISESSVAQNTQVAPDFANRLTKNIKKIEKWAKQQQLDAYRLYDADLPEYNFAVDRYSDHIVIQEYAAPKSIEQNKARQRLLDAVTATLHVTGIETNKLVLKVRQKQKGTNQYEKLANKGEYFYVNEYGAKLWVNLTDYLDTGIFLDHRLTRKMVGQMAKGKTFLNLFAYTGSATIHAALHGAKATTSVDMSNTYLNWAEQNLELNGLKSRNHRLFQADCLQWLAECRERFELIFVDPPTFSNSKRMEDSWDVQRDHIKLMTQLKRILTSDGMIVFSNNKRGFKMDFNGLTALGLVAENISYKTLPLDFERDPHIHNCWIIRHIEN</sequence>
<proteinExistence type="inferred from homology"/>
<comment type="function">
    <text evidence="1">Specifically methylates the guanine in position 2445 (m2G2445) and the guanine in position 2069 (m7G2069) of 23S rRNA.</text>
</comment>
<comment type="catalytic activity">
    <reaction evidence="1">
        <text>guanosine(2445) in 23S rRNA + S-adenosyl-L-methionine = N(2)-methylguanosine(2445) in 23S rRNA + S-adenosyl-L-homocysteine + H(+)</text>
        <dbReference type="Rhea" id="RHEA:42740"/>
        <dbReference type="Rhea" id="RHEA-COMP:10215"/>
        <dbReference type="Rhea" id="RHEA-COMP:10216"/>
        <dbReference type="ChEBI" id="CHEBI:15378"/>
        <dbReference type="ChEBI" id="CHEBI:57856"/>
        <dbReference type="ChEBI" id="CHEBI:59789"/>
        <dbReference type="ChEBI" id="CHEBI:74269"/>
        <dbReference type="ChEBI" id="CHEBI:74481"/>
        <dbReference type="EC" id="2.1.1.173"/>
    </reaction>
</comment>
<comment type="catalytic activity">
    <reaction evidence="1">
        <text>guanosine(2069) in 23S rRNA + S-adenosyl-L-methionine = N(2)-methylguanosine(2069) in 23S rRNA + S-adenosyl-L-homocysteine + H(+)</text>
        <dbReference type="Rhea" id="RHEA:43772"/>
        <dbReference type="Rhea" id="RHEA-COMP:10688"/>
        <dbReference type="Rhea" id="RHEA-COMP:10689"/>
        <dbReference type="ChEBI" id="CHEBI:15378"/>
        <dbReference type="ChEBI" id="CHEBI:57856"/>
        <dbReference type="ChEBI" id="CHEBI:59789"/>
        <dbReference type="ChEBI" id="CHEBI:74269"/>
        <dbReference type="ChEBI" id="CHEBI:74481"/>
        <dbReference type="EC" id="2.1.1.264"/>
    </reaction>
</comment>
<comment type="subcellular location">
    <subcellularLocation>
        <location evidence="1">Cytoplasm</location>
    </subcellularLocation>
</comment>
<comment type="similarity">
    <text evidence="1">Belongs to the methyltransferase superfamily. RlmKL family.</text>
</comment>
<comment type="sequence caution" evidence="2">
    <conflict type="erroneous initiation">
        <sequence resource="EMBL-CDS" id="AAP95286"/>
    </conflict>
    <text>Extended N-terminus.</text>
</comment>
<name>RLMKL_HAEDU</name>
<feature type="chain" id="PRO_0000366759" description="Ribosomal RNA large subunit methyltransferase K/L">
    <location>
        <begin position="1"/>
        <end position="712"/>
    </location>
</feature>
<feature type="domain" description="THUMP" evidence="1">
    <location>
        <begin position="46"/>
        <end position="157"/>
    </location>
</feature>
<accession>Q7VP04</accession>
<dbReference type="EC" id="2.1.1.173" evidence="1"/>
<dbReference type="EC" id="2.1.1.264" evidence="1"/>
<dbReference type="EMBL" id="AE017143">
    <property type="protein sequence ID" value="AAP95286.1"/>
    <property type="status" value="ALT_INIT"/>
    <property type="molecule type" value="Genomic_DNA"/>
</dbReference>
<dbReference type="RefSeq" id="WP_041603351.1">
    <property type="nucleotide sequence ID" value="NC_002940.2"/>
</dbReference>
<dbReference type="SMR" id="Q7VP04"/>
<dbReference type="STRING" id="233412.HD_0307"/>
<dbReference type="KEGG" id="hdu:HD_0307"/>
<dbReference type="eggNOG" id="COG0116">
    <property type="taxonomic scope" value="Bacteria"/>
</dbReference>
<dbReference type="eggNOG" id="COG1092">
    <property type="taxonomic scope" value="Bacteria"/>
</dbReference>
<dbReference type="HOGENOM" id="CLU_014042_2_0_6"/>
<dbReference type="OrthoDB" id="9809404at2"/>
<dbReference type="Proteomes" id="UP000001022">
    <property type="component" value="Chromosome"/>
</dbReference>
<dbReference type="GO" id="GO:0005737">
    <property type="term" value="C:cytoplasm"/>
    <property type="evidence" value="ECO:0007669"/>
    <property type="project" value="UniProtKB-SubCell"/>
</dbReference>
<dbReference type="GO" id="GO:0052915">
    <property type="term" value="F:23S rRNA (guanine(2445)-N(2))-methyltransferase activity"/>
    <property type="evidence" value="ECO:0007669"/>
    <property type="project" value="UniProtKB-UniRule"/>
</dbReference>
<dbReference type="GO" id="GO:0003723">
    <property type="term" value="F:RNA binding"/>
    <property type="evidence" value="ECO:0007669"/>
    <property type="project" value="UniProtKB-KW"/>
</dbReference>
<dbReference type="GO" id="GO:0070043">
    <property type="term" value="F:rRNA (guanine-N7-)-methyltransferase activity"/>
    <property type="evidence" value="ECO:0007669"/>
    <property type="project" value="UniProtKB-UniRule"/>
</dbReference>
<dbReference type="CDD" id="cd02440">
    <property type="entry name" value="AdoMet_MTases"/>
    <property type="match status" value="1"/>
</dbReference>
<dbReference type="CDD" id="cd11715">
    <property type="entry name" value="THUMP_AdoMetMT"/>
    <property type="match status" value="1"/>
</dbReference>
<dbReference type="FunFam" id="3.30.750.80:FF:000001">
    <property type="entry name" value="Ribosomal RNA large subunit methyltransferase K/L"/>
    <property type="match status" value="1"/>
</dbReference>
<dbReference type="FunFam" id="3.40.50.150:FF:000039">
    <property type="entry name" value="Ribosomal RNA large subunit methyltransferase K/L"/>
    <property type="match status" value="1"/>
</dbReference>
<dbReference type="Gene3D" id="3.30.2130.30">
    <property type="match status" value="1"/>
</dbReference>
<dbReference type="Gene3D" id="3.30.750.80">
    <property type="entry name" value="RNA methyltransferase domain (HRMD) like"/>
    <property type="match status" value="1"/>
</dbReference>
<dbReference type="Gene3D" id="3.40.50.150">
    <property type="entry name" value="Vaccinia Virus protein VP39"/>
    <property type="match status" value="2"/>
</dbReference>
<dbReference type="HAMAP" id="MF_01858">
    <property type="entry name" value="23SrRNA_methyltr_KL"/>
    <property type="match status" value="1"/>
</dbReference>
<dbReference type="InterPro" id="IPR017244">
    <property type="entry name" value="23SrRNA_methyltr_KL"/>
</dbReference>
<dbReference type="InterPro" id="IPR002052">
    <property type="entry name" value="DNA_methylase_N6_adenine_CS"/>
</dbReference>
<dbReference type="InterPro" id="IPR000241">
    <property type="entry name" value="RlmKL-like_Mtase"/>
</dbReference>
<dbReference type="InterPro" id="IPR053943">
    <property type="entry name" value="RlmKL-like_Mtase_CS"/>
</dbReference>
<dbReference type="InterPro" id="IPR054170">
    <property type="entry name" value="RlmL_1st"/>
</dbReference>
<dbReference type="InterPro" id="IPR019614">
    <property type="entry name" value="SAM-dep_methyl-trfase"/>
</dbReference>
<dbReference type="InterPro" id="IPR029063">
    <property type="entry name" value="SAM-dependent_MTases_sf"/>
</dbReference>
<dbReference type="InterPro" id="IPR004114">
    <property type="entry name" value="THUMP_dom"/>
</dbReference>
<dbReference type="NCBIfam" id="NF008748">
    <property type="entry name" value="PRK11783.1"/>
    <property type="match status" value="1"/>
</dbReference>
<dbReference type="PANTHER" id="PTHR47313">
    <property type="entry name" value="RIBOSOMAL RNA LARGE SUBUNIT METHYLTRANSFERASE K/L"/>
    <property type="match status" value="1"/>
</dbReference>
<dbReference type="PANTHER" id="PTHR47313:SF1">
    <property type="entry name" value="RIBOSOMAL RNA LARGE SUBUNIT METHYLTRANSFERASE K_L"/>
    <property type="match status" value="1"/>
</dbReference>
<dbReference type="Pfam" id="PF10672">
    <property type="entry name" value="Methyltrans_SAM"/>
    <property type="match status" value="1"/>
</dbReference>
<dbReference type="Pfam" id="PF22020">
    <property type="entry name" value="RlmL_1st"/>
    <property type="match status" value="1"/>
</dbReference>
<dbReference type="Pfam" id="PF02926">
    <property type="entry name" value="THUMP"/>
    <property type="match status" value="1"/>
</dbReference>
<dbReference type="Pfam" id="PF01170">
    <property type="entry name" value="UPF0020"/>
    <property type="match status" value="1"/>
</dbReference>
<dbReference type="PIRSF" id="PIRSF037618">
    <property type="entry name" value="RNA_Mtase_bacteria_prd"/>
    <property type="match status" value="1"/>
</dbReference>
<dbReference type="SMART" id="SM00981">
    <property type="entry name" value="THUMP"/>
    <property type="match status" value="1"/>
</dbReference>
<dbReference type="SUPFAM" id="SSF53335">
    <property type="entry name" value="S-adenosyl-L-methionine-dependent methyltransferases"/>
    <property type="match status" value="2"/>
</dbReference>
<dbReference type="PROSITE" id="PS51165">
    <property type="entry name" value="THUMP"/>
    <property type="match status" value="1"/>
</dbReference>
<dbReference type="PROSITE" id="PS01261">
    <property type="entry name" value="UPF0020"/>
    <property type="match status" value="1"/>
</dbReference>